<dbReference type="EMBL" id="CP000605">
    <property type="protein sequence ID" value="ACD98758.1"/>
    <property type="molecule type" value="Genomic_DNA"/>
</dbReference>
<dbReference type="RefSeq" id="WP_007051640.1">
    <property type="nucleotide sequence ID" value="NZ_AABM02000012.1"/>
</dbReference>
<dbReference type="SMR" id="B3DNP9"/>
<dbReference type="GeneID" id="69577366"/>
<dbReference type="KEGG" id="blj:BLD_1313"/>
<dbReference type="HOGENOM" id="CLU_005965_2_4_11"/>
<dbReference type="Proteomes" id="UP000002419">
    <property type="component" value="Chromosome"/>
</dbReference>
<dbReference type="GO" id="GO:0005524">
    <property type="term" value="F:ATP binding"/>
    <property type="evidence" value="ECO:0007669"/>
    <property type="project" value="UniProtKB-UniRule"/>
</dbReference>
<dbReference type="GO" id="GO:0140662">
    <property type="term" value="F:ATP-dependent protein folding chaperone"/>
    <property type="evidence" value="ECO:0007669"/>
    <property type="project" value="InterPro"/>
</dbReference>
<dbReference type="GO" id="GO:0051082">
    <property type="term" value="F:unfolded protein binding"/>
    <property type="evidence" value="ECO:0007669"/>
    <property type="project" value="InterPro"/>
</dbReference>
<dbReference type="CDD" id="cd10234">
    <property type="entry name" value="ASKHA_NBD_HSP70_DnaK-like"/>
    <property type="match status" value="1"/>
</dbReference>
<dbReference type="FunFam" id="2.60.34.10:FF:000014">
    <property type="entry name" value="Chaperone protein DnaK HSP70"/>
    <property type="match status" value="1"/>
</dbReference>
<dbReference type="FunFam" id="1.20.1270.10:FF:000001">
    <property type="entry name" value="Molecular chaperone DnaK"/>
    <property type="match status" value="1"/>
</dbReference>
<dbReference type="FunFam" id="3.30.420.40:FF:000071">
    <property type="entry name" value="Molecular chaperone DnaK"/>
    <property type="match status" value="1"/>
</dbReference>
<dbReference type="FunFam" id="3.90.640.10:FF:000003">
    <property type="entry name" value="Molecular chaperone DnaK"/>
    <property type="match status" value="1"/>
</dbReference>
<dbReference type="Gene3D" id="1.20.1270.10">
    <property type="match status" value="1"/>
</dbReference>
<dbReference type="Gene3D" id="3.30.420.40">
    <property type="match status" value="2"/>
</dbReference>
<dbReference type="Gene3D" id="3.90.640.10">
    <property type="entry name" value="Actin, Chain A, domain 4"/>
    <property type="match status" value="1"/>
</dbReference>
<dbReference type="Gene3D" id="2.60.34.10">
    <property type="entry name" value="Substrate Binding Domain Of DNAk, Chain A, domain 1"/>
    <property type="match status" value="1"/>
</dbReference>
<dbReference type="HAMAP" id="MF_00332">
    <property type="entry name" value="DnaK"/>
    <property type="match status" value="1"/>
</dbReference>
<dbReference type="InterPro" id="IPR043129">
    <property type="entry name" value="ATPase_NBD"/>
</dbReference>
<dbReference type="InterPro" id="IPR012725">
    <property type="entry name" value="Chaperone_DnaK"/>
</dbReference>
<dbReference type="InterPro" id="IPR018181">
    <property type="entry name" value="Heat_shock_70_CS"/>
</dbReference>
<dbReference type="InterPro" id="IPR029048">
    <property type="entry name" value="HSP70_C_sf"/>
</dbReference>
<dbReference type="InterPro" id="IPR029047">
    <property type="entry name" value="HSP70_peptide-bd_sf"/>
</dbReference>
<dbReference type="InterPro" id="IPR013126">
    <property type="entry name" value="Hsp_70_fam"/>
</dbReference>
<dbReference type="NCBIfam" id="NF001413">
    <property type="entry name" value="PRK00290.1"/>
    <property type="match status" value="1"/>
</dbReference>
<dbReference type="NCBIfam" id="TIGR02350">
    <property type="entry name" value="prok_dnaK"/>
    <property type="match status" value="1"/>
</dbReference>
<dbReference type="PANTHER" id="PTHR19375">
    <property type="entry name" value="HEAT SHOCK PROTEIN 70KDA"/>
    <property type="match status" value="1"/>
</dbReference>
<dbReference type="Pfam" id="PF00012">
    <property type="entry name" value="HSP70"/>
    <property type="match status" value="2"/>
</dbReference>
<dbReference type="PRINTS" id="PR00301">
    <property type="entry name" value="HEATSHOCK70"/>
</dbReference>
<dbReference type="SUPFAM" id="SSF53067">
    <property type="entry name" value="Actin-like ATPase domain"/>
    <property type="match status" value="2"/>
</dbReference>
<dbReference type="SUPFAM" id="SSF100934">
    <property type="entry name" value="Heat shock protein 70kD (HSP70), C-terminal subdomain"/>
    <property type="match status" value="1"/>
</dbReference>
<dbReference type="SUPFAM" id="SSF100920">
    <property type="entry name" value="Heat shock protein 70kD (HSP70), peptide-binding domain"/>
    <property type="match status" value="1"/>
</dbReference>
<dbReference type="PROSITE" id="PS00297">
    <property type="entry name" value="HSP70_1"/>
    <property type="match status" value="1"/>
</dbReference>
<dbReference type="PROSITE" id="PS00329">
    <property type="entry name" value="HSP70_2"/>
    <property type="match status" value="1"/>
</dbReference>
<dbReference type="PROSITE" id="PS01036">
    <property type="entry name" value="HSP70_3"/>
    <property type="match status" value="1"/>
</dbReference>
<protein>
    <recommendedName>
        <fullName evidence="1">Chaperone protein DnaK</fullName>
    </recommendedName>
    <alternativeName>
        <fullName evidence="1">HSP70</fullName>
    </alternativeName>
    <alternativeName>
        <fullName evidence="1">Heat shock 70 kDa protein</fullName>
    </alternativeName>
    <alternativeName>
        <fullName evidence="1">Heat shock protein 70</fullName>
    </alternativeName>
</protein>
<reference key="1">
    <citation type="journal article" date="2008" name="BMC Genomics">
        <title>Comparative genomic analysis of the gut bacterium Bifidobacterium longum reveals loci susceptible to deletion during pure culture growth.</title>
        <authorList>
            <person name="Lee J.H."/>
            <person name="Karamychev V.N."/>
            <person name="Kozyavkin S.A."/>
            <person name="Mills D."/>
            <person name="Pavlov A.R."/>
            <person name="Pavlova N.V."/>
            <person name="Polouchine N.N."/>
            <person name="Richardson P.M."/>
            <person name="Shakhova V.V."/>
            <person name="Slesarev A.I."/>
            <person name="Weimer B."/>
            <person name="O'Sullivan D.J."/>
        </authorList>
    </citation>
    <scope>NUCLEOTIDE SEQUENCE [LARGE SCALE GENOMIC DNA]</scope>
    <source>
        <strain>DJO10A</strain>
    </source>
</reference>
<evidence type="ECO:0000255" key="1">
    <source>
        <dbReference type="HAMAP-Rule" id="MF_00332"/>
    </source>
</evidence>
<evidence type="ECO:0000256" key="2">
    <source>
        <dbReference type="SAM" id="MobiDB-lite"/>
    </source>
</evidence>
<proteinExistence type="inferred from homology"/>
<comment type="function">
    <text evidence="1">Acts as a chaperone.</text>
</comment>
<comment type="induction">
    <text evidence="1">By stress conditions e.g. heat shock.</text>
</comment>
<comment type="similarity">
    <text evidence="1">Belongs to the heat shock protein 70 family.</text>
</comment>
<name>DNAK_BIFLD</name>
<gene>
    <name evidence="1" type="primary">dnaK</name>
    <name type="ordered locus">BLD_1313</name>
</gene>
<keyword id="KW-0067">ATP-binding</keyword>
<keyword id="KW-0143">Chaperone</keyword>
<keyword id="KW-0547">Nucleotide-binding</keyword>
<keyword id="KW-0597">Phosphoprotein</keyword>
<keyword id="KW-0346">Stress response</keyword>
<accession>B3DNP9</accession>
<feature type="chain" id="PRO_1000119671" description="Chaperone protein DnaK">
    <location>
        <begin position="1"/>
        <end position="626"/>
    </location>
</feature>
<feature type="region of interest" description="Disordered" evidence="2">
    <location>
        <begin position="586"/>
        <end position="626"/>
    </location>
</feature>
<feature type="compositionally biased region" description="Low complexity" evidence="2">
    <location>
        <begin position="586"/>
        <end position="606"/>
    </location>
</feature>
<feature type="compositionally biased region" description="Acidic residues" evidence="2">
    <location>
        <begin position="607"/>
        <end position="626"/>
    </location>
</feature>
<feature type="modified residue" description="Phosphothreonine; by autocatalysis" evidence="1">
    <location>
        <position position="175"/>
    </location>
</feature>
<organism>
    <name type="scientific">Bifidobacterium longum (strain DJO10A)</name>
    <dbReference type="NCBI Taxonomy" id="205913"/>
    <lineage>
        <taxon>Bacteria</taxon>
        <taxon>Bacillati</taxon>
        <taxon>Actinomycetota</taxon>
        <taxon>Actinomycetes</taxon>
        <taxon>Bifidobacteriales</taxon>
        <taxon>Bifidobacteriaceae</taxon>
        <taxon>Bifidobacterium</taxon>
    </lineage>
</organism>
<sequence>MARAVGIDLGTTNSCIATLEGGEPTVIVNAEGARTTPSVVAFSKSGEILVGEVAKRQAVTNVDRTISSVKRHMGSDWTVDIDGKKWTPQEISAQILMKLKRDAEAYLGEPVTDAVITCPAYFNDAQRQATKDAGKIAGLNVLRIINEPTAAALAYGLEKGKEDERILVFDLGGGTFDVSLLEIGKDDDGFSTIQVQATNGDNHLGGDDWDQKIIDWLVSEVKNKYGVDLSKDKIALQRLKEAAEQAKKELSSSTSTSISMQYLAMTPDGTPVHLDETLTRAHFEEMTSDLLGRCRTPFNNVLHDAGISVSDIDHVVLVGGSTRMPAVKELVKELTGGKEANQSVNPDEVVAVGAAVQSGVIKGDRKDVLLIDVTPLSLGIETKGGIMTKLIDRNTAIPTKRSEVFSTAEDNQPSVLIQVYQGEREFARDNKPLGTFELTGIAPAPRGVPQIEVTFDIDANGIVHVSAKDKGTGKEQSMTITGGSGLPKDEIDRMVKEAEAHEAEDKKRKEDAETRNQAEAFAYSTEKLVNDNKDKLSDDIVKEVTDKVNALKEALKGDDTEKVKTAQTELMTAAQKIGQVLYAQQGAEGAAAGADGAGASAGSASGSDDDTVEAEVVDDDDDKDNK</sequence>